<keyword id="KW-0148">Chlorophyll</keyword>
<keyword id="KW-0150">Chloroplast</keyword>
<keyword id="KW-0157">Chromophore</keyword>
<keyword id="KW-0437">Light-harvesting polypeptide</keyword>
<keyword id="KW-0472">Membrane</keyword>
<keyword id="KW-0602">Photosynthesis</keyword>
<keyword id="KW-0604">Photosystem II</keyword>
<keyword id="KW-0934">Plastid</keyword>
<keyword id="KW-0793">Thylakoid</keyword>
<keyword id="KW-0809">Transit peptide</keyword>
<keyword id="KW-0812">Transmembrane</keyword>
<keyword id="KW-1133">Transmembrane helix</keyword>
<reference key="1">
    <citation type="journal article" date="1993" name="Nucleic Acids Res.">
        <title>Characterization of gene clusters encoding the fucoxanthin chlorophyll proteins of the diatom Phaeodactylum tricornutum.</title>
        <authorList>
            <person name="Bhaya D."/>
            <person name="Grossman A.R."/>
        </authorList>
    </citation>
    <scope>NUCLEOTIDE SEQUENCE [GENOMIC DNA]</scope>
    <source>
        <strain>UTEX 646 / Bohlin</strain>
    </source>
</reference>
<reference key="2">
    <citation type="journal article" date="1990" name="Mol. Gen. Genet.">
        <title>Light-harvesting proteins of diatoms: their relationship to the chlorophyll a/b binding proteins of higher plants and their mode of transport into plastids.</title>
        <authorList>
            <person name="Grossman A."/>
            <person name="Manodori A."/>
            <person name="Snyder D."/>
        </authorList>
    </citation>
    <scope>NUCLEOTIDE SEQUENCE [MRNA]</scope>
    <source>
        <strain>UTEX 646 / Bohlin</strain>
    </source>
</reference>
<protein>
    <recommendedName>
        <fullName>Fucoxanthin-chlorophyll a-c binding protein E, chloroplastic</fullName>
    </recommendedName>
</protein>
<name>FCPE_PHATR</name>
<feature type="transit peptide" description="Chloroplast" evidence="2">
    <location>
        <begin position="1"/>
        <end position="31"/>
    </location>
</feature>
<feature type="chain" id="PRO_0000021242" description="Fucoxanthin-chlorophyll a-c binding protein E, chloroplastic">
    <location>
        <begin position="32"/>
        <end position="197"/>
    </location>
</feature>
<feature type="transmembrane region" description="Helical" evidence="1">
    <location>
        <begin position="73"/>
        <end position="94"/>
    </location>
</feature>
<feature type="transmembrane region" description="Helical" evidence="1">
    <location>
        <begin position="114"/>
        <end position="134"/>
    </location>
</feature>
<feature type="transmembrane region" description="Helical" evidence="1">
    <location>
        <begin position="174"/>
        <end position="196"/>
    </location>
</feature>
<feature type="sequence conflict" description="In Ref. 2; CAA38956." evidence="2" ref="2">
    <original>V</original>
    <variation>A</variation>
    <location>
        <position position="4"/>
    </location>
</feature>
<feature type="sequence conflict" description="In Ref. 2; CAA38956." evidence="2" ref="2">
    <original>R</original>
    <variation>A</variation>
    <location>
        <position position="15"/>
    </location>
</feature>
<proteinExistence type="evidence at transcript level"/>
<accession>Q41093</accession>
<accession>Q01274</accession>
<organism>
    <name type="scientific">Phaeodactylum tricornutum</name>
    <name type="common">Diatom</name>
    <dbReference type="NCBI Taxonomy" id="2850"/>
    <lineage>
        <taxon>Eukaryota</taxon>
        <taxon>Sar</taxon>
        <taxon>Stramenopiles</taxon>
        <taxon>Ochrophyta</taxon>
        <taxon>Bacillariophyta</taxon>
        <taxon>Bacillariophyceae</taxon>
        <taxon>Bacillariophycidae</taxon>
        <taxon>Naviculales</taxon>
        <taxon>Phaeodactylaceae</taxon>
        <taxon>Phaeodactylum</taxon>
    </lineage>
</organism>
<gene>
    <name type="primary">FCPE</name>
    <name type="synonym">FPC3</name>
</gene>
<comment type="function">
    <text>The light-harvesting complex (LHC) functions as a light receptor, it captures and delivers excitation energy to photosystems with which it is closely associated. Energy is transferred from the carotenoid and chlorophyll C (or B) to chlorophyll A and the photosynthetic reaction centers where it is used to synthesize ATP and reducing power.</text>
</comment>
<comment type="subunit">
    <text>The LHC complex of chromophytic algae is composed of fucoxanthin, chlorophyll A and C bound non-covalently by fucoxanthin chlorophyll proteins (FCPs). The ratio of the pigments in LHC; fucoxanthin: chlorophyll C: chlorophyll A; (0.6-1): (0.1-0.3): (1).</text>
</comment>
<comment type="subcellular location">
    <subcellularLocation>
        <location>Plastid</location>
        <location>Chloroplast thylakoid membrane</location>
        <topology>Multi-pass membrane protein</topology>
    </subcellularLocation>
    <text>FCPs are probably transported across the endoplasmic reticulum membranes that surround the plastid via a signal peptide, followed by translocation across the thylakoid membrane via a transit peptide.</text>
</comment>
<comment type="similarity">
    <text evidence="2">Belongs to the fucoxanthin chlorophyll protein family.</text>
</comment>
<evidence type="ECO:0000255" key="1"/>
<evidence type="ECO:0000305" key="2"/>
<dbReference type="EMBL" id="Z23153">
    <property type="protein sequence ID" value="CAA80676.1"/>
    <property type="molecule type" value="Genomic_DNA"/>
</dbReference>
<dbReference type="EMBL" id="X55157">
    <property type="protein sequence ID" value="CAA38956.1"/>
    <property type="molecule type" value="mRNA"/>
</dbReference>
<dbReference type="PIR" id="S42129">
    <property type="entry name" value="S42129"/>
</dbReference>
<dbReference type="SMR" id="Q41093"/>
<dbReference type="HOGENOM" id="CLU_057943_4_1_1"/>
<dbReference type="GO" id="GO:0009535">
    <property type="term" value="C:chloroplast thylakoid membrane"/>
    <property type="evidence" value="ECO:0007669"/>
    <property type="project" value="UniProtKB-SubCell"/>
</dbReference>
<dbReference type="GO" id="GO:0030076">
    <property type="term" value="C:light-harvesting complex"/>
    <property type="evidence" value="ECO:0007669"/>
    <property type="project" value="UniProtKB-KW"/>
</dbReference>
<dbReference type="GO" id="GO:0009523">
    <property type="term" value="C:photosystem II"/>
    <property type="evidence" value="ECO:0007669"/>
    <property type="project" value="UniProtKB-KW"/>
</dbReference>
<dbReference type="GO" id="GO:0016168">
    <property type="term" value="F:chlorophyll binding"/>
    <property type="evidence" value="ECO:0007669"/>
    <property type="project" value="UniProtKB-KW"/>
</dbReference>
<dbReference type="GO" id="GO:0009765">
    <property type="term" value="P:photosynthesis, light harvesting"/>
    <property type="evidence" value="ECO:0007669"/>
    <property type="project" value="InterPro"/>
</dbReference>
<dbReference type="FunFam" id="1.10.3460.10:FF:000011">
    <property type="entry name" value="Fucoxanthin chlorophyll a/c protein 8"/>
    <property type="match status" value="1"/>
</dbReference>
<dbReference type="Gene3D" id="1.10.3460.10">
    <property type="entry name" value="Chlorophyll a/b binding protein domain"/>
    <property type="match status" value="1"/>
</dbReference>
<dbReference type="InterPro" id="IPR001344">
    <property type="entry name" value="Chloro_AB-bd_pln"/>
</dbReference>
<dbReference type="InterPro" id="IPR022796">
    <property type="entry name" value="Chloroa_b-bind"/>
</dbReference>
<dbReference type="PANTHER" id="PTHR21649">
    <property type="entry name" value="CHLOROPHYLL A/B BINDING PROTEIN"/>
    <property type="match status" value="1"/>
</dbReference>
<dbReference type="Pfam" id="PF00504">
    <property type="entry name" value="Chloroa_b-bind"/>
    <property type="match status" value="1"/>
</dbReference>
<dbReference type="SUPFAM" id="SSF103511">
    <property type="entry name" value="Chlorophyll a-b binding protein"/>
    <property type="match status" value="1"/>
</dbReference>
<sequence>MKFVVFASLLASAARFAPAQQSARTSVATNMAFENELGAQPPLGFFDPLGLVADGDQEKFDRLRYVEIKHGRISMLAVAGYLVQENGIRLPGDIDYSGTSFESIPNGFAALTTISGAGIAQIVAFIGFLELAVMKDITGGEFVGDFRNDFIDFGWDSFDEETKMQKRAIELNQGRAAQMGILALMVHEQLGVSLIPN</sequence>